<feature type="chain" id="PRO_0000357426" description="Enolase-phosphatase E1">
    <location>
        <begin position="1"/>
        <end position="221"/>
    </location>
</feature>
<gene>
    <name evidence="1" type="primary">mtnC</name>
    <name type="ordered locus">Xaut_2913</name>
</gene>
<name>MTNC_XANP2</name>
<comment type="function">
    <text evidence="1">Bifunctional enzyme that catalyzes the enolization of 2,3-diketo-5-methylthiopentyl-1-phosphate (DK-MTP-1-P) into the intermediate 2-hydroxy-3-keto-5-methylthiopentenyl-1-phosphate (HK-MTPenyl-1-P), which is then dephosphorylated to form the acireductone 1,2-dihydroxy-3-keto-5-methylthiopentene (DHK-MTPene).</text>
</comment>
<comment type="catalytic activity">
    <reaction evidence="1">
        <text>5-methylsulfanyl-2,3-dioxopentyl phosphate + H2O = 1,2-dihydroxy-5-(methylsulfanyl)pent-1-en-3-one + phosphate</text>
        <dbReference type="Rhea" id="RHEA:21700"/>
        <dbReference type="ChEBI" id="CHEBI:15377"/>
        <dbReference type="ChEBI" id="CHEBI:43474"/>
        <dbReference type="ChEBI" id="CHEBI:49252"/>
        <dbReference type="ChEBI" id="CHEBI:58828"/>
        <dbReference type="EC" id="3.1.3.77"/>
    </reaction>
</comment>
<comment type="cofactor">
    <cofactor evidence="1">
        <name>Mg(2+)</name>
        <dbReference type="ChEBI" id="CHEBI:18420"/>
    </cofactor>
    <text evidence="1">Binds 1 Mg(2+) ion per subunit.</text>
</comment>
<comment type="pathway">
    <text evidence="1">Amino-acid biosynthesis; L-methionine biosynthesis via salvage pathway; L-methionine from S-methyl-5-thio-alpha-D-ribose 1-phosphate: step 3/6.</text>
</comment>
<comment type="pathway">
    <text evidence="1">Amino-acid biosynthesis; L-methionine biosynthesis via salvage pathway; L-methionine from S-methyl-5-thio-alpha-D-ribose 1-phosphate: step 4/6.</text>
</comment>
<comment type="subunit">
    <text evidence="1">Monomer.</text>
</comment>
<comment type="similarity">
    <text evidence="1">Belongs to the HAD-like hydrolase superfamily. MasA/MtnC family.</text>
</comment>
<keyword id="KW-0028">Amino-acid biosynthesis</keyword>
<keyword id="KW-0378">Hydrolase</keyword>
<keyword id="KW-0460">Magnesium</keyword>
<keyword id="KW-0479">Metal-binding</keyword>
<keyword id="KW-0486">Methionine biosynthesis</keyword>
<keyword id="KW-1185">Reference proteome</keyword>
<dbReference type="EC" id="3.1.3.77" evidence="1"/>
<dbReference type="EMBL" id="CP000781">
    <property type="protein sequence ID" value="ABS68149.1"/>
    <property type="molecule type" value="Genomic_DNA"/>
</dbReference>
<dbReference type="SMR" id="A7IJF6"/>
<dbReference type="STRING" id="78245.Xaut_2913"/>
<dbReference type="KEGG" id="xau:Xaut_2913"/>
<dbReference type="eggNOG" id="COG4229">
    <property type="taxonomic scope" value="Bacteria"/>
</dbReference>
<dbReference type="HOGENOM" id="CLU_023273_0_0_5"/>
<dbReference type="OrthoDB" id="9797416at2"/>
<dbReference type="PhylomeDB" id="A7IJF6"/>
<dbReference type="UniPathway" id="UPA00904">
    <property type="reaction ID" value="UER00876"/>
</dbReference>
<dbReference type="UniPathway" id="UPA00904">
    <property type="reaction ID" value="UER00877"/>
</dbReference>
<dbReference type="Proteomes" id="UP000002417">
    <property type="component" value="Chromosome"/>
</dbReference>
<dbReference type="GO" id="GO:0043715">
    <property type="term" value="F:2,3-diketo-5-methylthiopentyl-1-phosphate enolase activity"/>
    <property type="evidence" value="ECO:0007669"/>
    <property type="project" value="UniProtKB-UniRule"/>
</dbReference>
<dbReference type="GO" id="GO:0043716">
    <property type="term" value="F:2-hydroxy-3-keto-5-methylthiopentenyl-1-phosphate phosphatase activity"/>
    <property type="evidence" value="ECO:0007669"/>
    <property type="project" value="UniProtKB-UniRule"/>
</dbReference>
<dbReference type="GO" id="GO:0043874">
    <property type="term" value="F:acireductone synthase activity"/>
    <property type="evidence" value="ECO:0007669"/>
    <property type="project" value="UniProtKB-EC"/>
</dbReference>
<dbReference type="GO" id="GO:0000287">
    <property type="term" value="F:magnesium ion binding"/>
    <property type="evidence" value="ECO:0007669"/>
    <property type="project" value="UniProtKB-UniRule"/>
</dbReference>
<dbReference type="GO" id="GO:0019509">
    <property type="term" value="P:L-methionine salvage from methylthioadenosine"/>
    <property type="evidence" value="ECO:0007669"/>
    <property type="project" value="UniProtKB-UniRule"/>
</dbReference>
<dbReference type="CDD" id="cd01629">
    <property type="entry name" value="HAD_EP"/>
    <property type="match status" value="1"/>
</dbReference>
<dbReference type="Gene3D" id="1.10.720.60">
    <property type="match status" value="1"/>
</dbReference>
<dbReference type="Gene3D" id="3.40.50.1000">
    <property type="entry name" value="HAD superfamily/HAD-like"/>
    <property type="match status" value="1"/>
</dbReference>
<dbReference type="HAMAP" id="MF_01681">
    <property type="entry name" value="Salvage_MtnC"/>
    <property type="match status" value="1"/>
</dbReference>
<dbReference type="InterPro" id="IPR023943">
    <property type="entry name" value="Enolase-ppase_E1"/>
</dbReference>
<dbReference type="InterPro" id="IPR036412">
    <property type="entry name" value="HAD-like_sf"/>
</dbReference>
<dbReference type="InterPro" id="IPR023214">
    <property type="entry name" value="HAD_sf"/>
</dbReference>
<dbReference type="NCBIfam" id="TIGR01691">
    <property type="entry name" value="enolase-ppase"/>
    <property type="match status" value="1"/>
</dbReference>
<dbReference type="PANTHER" id="PTHR20371">
    <property type="entry name" value="ENOLASE-PHOSPHATASE E1"/>
    <property type="match status" value="1"/>
</dbReference>
<dbReference type="PANTHER" id="PTHR20371:SF1">
    <property type="entry name" value="ENOLASE-PHOSPHATASE E1"/>
    <property type="match status" value="1"/>
</dbReference>
<dbReference type="Pfam" id="PF00702">
    <property type="entry name" value="Hydrolase"/>
    <property type="match status" value="1"/>
</dbReference>
<dbReference type="SUPFAM" id="SSF56784">
    <property type="entry name" value="HAD-like"/>
    <property type="match status" value="1"/>
</dbReference>
<organism>
    <name type="scientific">Xanthobacter autotrophicus (strain ATCC BAA-1158 / Py2)</name>
    <dbReference type="NCBI Taxonomy" id="78245"/>
    <lineage>
        <taxon>Bacteria</taxon>
        <taxon>Pseudomonadati</taxon>
        <taxon>Pseudomonadota</taxon>
        <taxon>Alphaproteobacteria</taxon>
        <taxon>Hyphomicrobiales</taxon>
        <taxon>Xanthobacteraceae</taxon>
        <taxon>Xanthobacter</taxon>
    </lineage>
</organism>
<protein>
    <recommendedName>
        <fullName evidence="1">Enolase-phosphatase E1</fullName>
        <ecNumber evidence="1">3.1.3.77</ecNumber>
    </recommendedName>
    <alternativeName>
        <fullName evidence="1">2,3-diketo-5-methylthio-1-phosphopentane phosphatase</fullName>
    </alternativeName>
</protein>
<reference key="1">
    <citation type="submission" date="2007-07" db="EMBL/GenBank/DDBJ databases">
        <title>Complete sequence of chromosome of Xanthobacter autotrophicus Py2.</title>
        <authorList>
            <consortium name="US DOE Joint Genome Institute"/>
            <person name="Copeland A."/>
            <person name="Lucas S."/>
            <person name="Lapidus A."/>
            <person name="Barry K."/>
            <person name="Glavina del Rio T."/>
            <person name="Hammon N."/>
            <person name="Israni S."/>
            <person name="Dalin E."/>
            <person name="Tice H."/>
            <person name="Pitluck S."/>
            <person name="Sims D."/>
            <person name="Brettin T."/>
            <person name="Bruce D."/>
            <person name="Detter J.C."/>
            <person name="Han C."/>
            <person name="Tapia R."/>
            <person name="Brainard J."/>
            <person name="Schmutz J."/>
            <person name="Larimer F."/>
            <person name="Land M."/>
            <person name="Hauser L."/>
            <person name="Kyrpides N."/>
            <person name="Kim E."/>
            <person name="Ensigns S.A."/>
            <person name="Richardson P."/>
        </authorList>
    </citation>
    <scope>NUCLEOTIDE SEQUENCE [LARGE SCALE GENOMIC DNA]</scope>
    <source>
        <strain>ATCC BAA-1158 / Py2</strain>
    </source>
</reference>
<sequence>MTIKAILTDIEGAAGPASFLKDILLPYAREHLGAFIAAHAEDDGIEEALEEAGRLMGGFSLKPDEAEALLQRWMKQGRNPTPLKIIQGRIWQQGYEAGAFTAEIFPDVAPSLGAWKNAGIRLFTYSSSSELAQRLWLGSAGAEVFEGFFDTRVGQKLEEESYKAIAEQLALPAAEILVLSGNEDELDAAKAAGLATALIAREGGGGGNHPVAADFASVTIG</sequence>
<accession>A7IJF6</accession>
<evidence type="ECO:0000255" key="1">
    <source>
        <dbReference type="HAMAP-Rule" id="MF_01681"/>
    </source>
</evidence>
<proteinExistence type="inferred from homology"/>